<proteinExistence type="inferred from homology"/>
<feature type="chain" id="PRO_1000131086" description="Putative pre-16S rRNA nuclease">
    <location>
        <begin position="1"/>
        <end position="155"/>
    </location>
</feature>
<keyword id="KW-0963">Cytoplasm</keyword>
<keyword id="KW-0378">Hydrolase</keyword>
<keyword id="KW-0540">Nuclease</keyword>
<keyword id="KW-0690">Ribosome biogenesis</keyword>
<dbReference type="EC" id="3.1.-.-" evidence="1"/>
<dbReference type="EMBL" id="AM920689">
    <property type="protein sequence ID" value="CAP50764.1"/>
    <property type="molecule type" value="Genomic_DNA"/>
</dbReference>
<dbReference type="SMR" id="B0RQM9"/>
<dbReference type="KEGG" id="xca:xcc-b100_1414"/>
<dbReference type="HOGENOM" id="CLU_098240_3_2_6"/>
<dbReference type="Proteomes" id="UP000001188">
    <property type="component" value="Chromosome"/>
</dbReference>
<dbReference type="GO" id="GO:0005829">
    <property type="term" value="C:cytosol"/>
    <property type="evidence" value="ECO:0007669"/>
    <property type="project" value="TreeGrafter"/>
</dbReference>
<dbReference type="GO" id="GO:0004518">
    <property type="term" value="F:nuclease activity"/>
    <property type="evidence" value="ECO:0007669"/>
    <property type="project" value="UniProtKB-KW"/>
</dbReference>
<dbReference type="GO" id="GO:0000967">
    <property type="term" value="P:rRNA 5'-end processing"/>
    <property type="evidence" value="ECO:0007669"/>
    <property type="project" value="UniProtKB-UniRule"/>
</dbReference>
<dbReference type="CDD" id="cd16964">
    <property type="entry name" value="YqgF"/>
    <property type="match status" value="1"/>
</dbReference>
<dbReference type="FunFam" id="3.30.420.140:FF:000010">
    <property type="entry name" value="Putative pre-16S rRNA nuclease"/>
    <property type="match status" value="1"/>
</dbReference>
<dbReference type="Gene3D" id="3.30.420.140">
    <property type="entry name" value="YqgF/RNase H-like domain"/>
    <property type="match status" value="1"/>
</dbReference>
<dbReference type="HAMAP" id="MF_00651">
    <property type="entry name" value="Nuclease_YqgF"/>
    <property type="match status" value="1"/>
</dbReference>
<dbReference type="InterPro" id="IPR012337">
    <property type="entry name" value="RNaseH-like_sf"/>
</dbReference>
<dbReference type="InterPro" id="IPR005227">
    <property type="entry name" value="YqgF"/>
</dbReference>
<dbReference type="InterPro" id="IPR006641">
    <property type="entry name" value="YqgF/RNaseH-like_dom"/>
</dbReference>
<dbReference type="InterPro" id="IPR037027">
    <property type="entry name" value="YqgF/RNaseH-like_dom_sf"/>
</dbReference>
<dbReference type="NCBIfam" id="TIGR00250">
    <property type="entry name" value="RNAse_H_YqgF"/>
    <property type="match status" value="1"/>
</dbReference>
<dbReference type="PANTHER" id="PTHR33317">
    <property type="entry name" value="POLYNUCLEOTIDYL TRANSFERASE, RIBONUCLEASE H-LIKE SUPERFAMILY PROTEIN"/>
    <property type="match status" value="1"/>
</dbReference>
<dbReference type="PANTHER" id="PTHR33317:SF4">
    <property type="entry name" value="POLYNUCLEOTIDYL TRANSFERASE, RIBONUCLEASE H-LIKE SUPERFAMILY PROTEIN"/>
    <property type="match status" value="1"/>
</dbReference>
<dbReference type="Pfam" id="PF03652">
    <property type="entry name" value="RuvX"/>
    <property type="match status" value="1"/>
</dbReference>
<dbReference type="SMART" id="SM00732">
    <property type="entry name" value="YqgFc"/>
    <property type="match status" value="1"/>
</dbReference>
<dbReference type="SUPFAM" id="SSF53098">
    <property type="entry name" value="Ribonuclease H-like"/>
    <property type="match status" value="1"/>
</dbReference>
<gene>
    <name type="ordered locus">xcc-b100_1414</name>
</gene>
<organism>
    <name type="scientific">Xanthomonas campestris pv. campestris (strain B100)</name>
    <dbReference type="NCBI Taxonomy" id="509169"/>
    <lineage>
        <taxon>Bacteria</taxon>
        <taxon>Pseudomonadati</taxon>
        <taxon>Pseudomonadota</taxon>
        <taxon>Gammaproteobacteria</taxon>
        <taxon>Lysobacterales</taxon>
        <taxon>Lysobacteraceae</taxon>
        <taxon>Xanthomonas</taxon>
    </lineage>
</organism>
<reference key="1">
    <citation type="journal article" date="2008" name="J. Biotechnol.">
        <title>The genome of Xanthomonas campestris pv. campestris B100 and its use for the reconstruction of metabolic pathways involved in xanthan biosynthesis.</title>
        <authorList>
            <person name="Vorhoelter F.-J."/>
            <person name="Schneiker S."/>
            <person name="Goesmann A."/>
            <person name="Krause L."/>
            <person name="Bekel T."/>
            <person name="Kaiser O."/>
            <person name="Linke B."/>
            <person name="Patschkowski T."/>
            <person name="Rueckert C."/>
            <person name="Schmid J."/>
            <person name="Sidhu V.K."/>
            <person name="Sieber V."/>
            <person name="Tauch A."/>
            <person name="Watt S.A."/>
            <person name="Weisshaar B."/>
            <person name="Becker A."/>
            <person name="Niehaus K."/>
            <person name="Puehler A."/>
        </authorList>
    </citation>
    <scope>NUCLEOTIDE SEQUENCE [LARGE SCALE GENOMIC DNA]</scope>
    <source>
        <strain>B100</strain>
    </source>
</reference>
<name>YQGF_XANCB</name>
<sequence>MPEAGAIRPDATVLGFDVGSRRIGVAVGTALGAGARAVAVINVHANGPDWVALDRVHKEWRPAGLVVGDPLTLDDKDQPARKRAHAFARELRERYALPVVLIDERSSSVEAAQRFARERADGRKRRRDADALDAMAAAVIVERWLSAPEQATLLP</sequence>
<comment type="function">
    <text evidence="1">Could be a nuclease involved in processing of the 5'-end of pre-16S rRNA.</text>
</comment>
<comment type="subcellular location">
    <subcellularLocation>
        <location evidence="1">Cytoplasm</location>
    </subcellularLocation>
</comment>
<comment type="similarity">
    <text evidence="1">Belongs to the YqgF nuclease family.</text>
</comment>
<protein>
    <recommendedName>
        <fullName evidence="1">Putative pre-16S rRNA nuclease</fullName>
        <ecNumber evidence="1">3.1.-.-</ecNumber>
    </recommendedName>
</protein>
<accession>B0RQM9</accession>
<evidence type="ECO:0000255" key="1">
    <source>
        <dbReference type="HAMAP-Rule" id="MF_00651"/>
    </source>
</evidence>